<organismHost>
    <name type="scientific">Aves</name>
    <dbReference type="NCBI Taxonomy" id="8782"/>
</organismHost>
<organismHost>
    <name type="scientific">Felis catus</name>
    <name type="common">Cat</name>
    <name type="synonym">Felis silvestris catus</name>
    <dbReference type="NCBI Taxonomy" id="9685"/>
</organismHost>
<organismHost>
    <name type="scientific">Homo sapiens</name>
    <name type="common">Human</name>
    <dbReference type="NCBI Taxonomy" id="9606"/>
</organismHost>
<organismHost>
    <name type="scientific">Panthera pardus</name>
    <name type="common">Leopard</name>
    <name type="synonym">Felis pardus</name>
    <dbReference type="NCBI Taxonomy" id="9691"/>
</organismHost>
<organismHost>
    <name type="scientific">Panthera tigris</name>
    <name type="common">Tiger</name>
    <dbReference type="NCBI Taxonomy" id="9694"/>
</organismHost>
<organismHost>
    <name type="scientific">Sus scrofa</name>
    <name type="common">Pig</name>
    <dbReference type="NCBI Taxonomy" id="9823"/>
</organismHost>
<proteinExistence type="inferred from homology"/>
<organism>
    <name type="scientific">Influenza A virus (strain A/Chicken/Hong Kong/37.4/2002 H5N1 genotype X2)</name>
    <dbReference type="NCBI Taxonomy" id="284172"/>
    <lineage>
        <taxon>Viruses</taxon>
        <taxon>Riboviria</taxon>
        <taxon>Orthornavirae</taxon>
        <taxon>Negarnaviricota</taxon>
        <taxon>Polyploviricotina</taxon>
        <taxon>Insthoviricetes</taxon>
        <taxon>Articulavirales</taxon>
        <taxon>Orthomyxoviridae</taxon>
        <taxon>Alphainfluenzavirus</taxon>
        <taxon>Alphainfluenzavirus influenzae</taxon>
        <taxon>Influenza A virus</taxon>
    </lineage>
</organism>
<keyword id="KW-1167">Clathrin- and caveolin-independent endocytosis of virus by host</keyword>
<keyword id="KW-1165">Clathrin-mediated endocytosis of virus by host</keyword>
<keyword id="KW-1015">Disulfide bond</keyword>
<keyword id="KW-1170">Fusion of virus membrane with host endosomal membrane</keyword>
<keyword id="KW-1168">Fusion of virus membrane with host membrane</keyword>
<keyword id="KW-0325">Glycoprotein</keyword>
<keyword id="KW-0348">Hemagglutinin</keyword>
<keyword id="KW-1032">Host cell membrane</keyword>
<keyword id="KW-1043">Host membrane</keyword>
<keyword id="KW-0945">Host-virus interaction</keyword>
<keyword id="KW-0449">Lipoprotein</keyword>
<keyword id="KW-0472">Membrane</keyword>
<keyword id="KW-0564">Palmitate</keyword>
<keyword id="KW-0732">Signal</keyword>
<keyword id="KW-0812">Transmembrane</keyword>
<keyword id="KW-1133">Transmembrane helix</keyword>
<keyword id="KW-1161">Viral attachment to host cell</keyword>
<keyword id="KW-0261">Viral envelope protein</keyword>
<keyword id="KW-1162">Viral penetration into host cytoplasm</keyword>
<keyword id="KW-0946">Virion</keyword>
<keyword id="KW-1164">Virus endocytosis by host</keyword>
<keyword id="KW-1160">Virus entry into host cell</keyword>
<dbReference type="EMBL" id="AY651347">
    <property type="protein sequence ID" value="AAT73287.1"/>
    <property type="molecule type" value="Genomic_RNA"/>
</dbReference>
<dbReference type="SMR" id="Q6DQ20"/>
<dbReference type="GlyCosmos" id="Q6DQ20">
    <property type="glycosylation" value="6 sites, No reported glycans"/>
</dbReference>
<dbReference type="GO" id="GO:0020002">
    <property type="term" value="C:host cell plasma membrane"/>
    <property type="evidence" value="ECO:0007669"/>
    <property type="project" value="UniProtKB-SubCell"/>
</dbReference>
<dbReference type="GO" id="GO:0016020">
    <property type="term" value="C:membrane"/>
    <property type="evidence" value="ECO:0007669"/>
    <property type="project" value="UniProtKB-KW"/>
</dbReference>
<dbReference type="GO" id="GO:0019031">
    <property type="term" value="C:viral envelope"/>
    <property type="evidence" value="ECO:0007669"/>
    <property type="project" value="UniProtKB-KW"/>
</dbReference>
<dbReference type="GO" id="GO:0055036">
    <property type="term" value="C:virion membrane"/>
    <property type="evidence" value="ECO:0007669"/>
    <property type="project" value="UniProtKB-SubCell"/>
</dbReference>
<dbReference type="GO" id="GO:0046789">
    <property type="term" value="F:host cell surface receptor binding"/>
    <property type="evidence" value="ECO:0007669"/>
    <property type="project" value="InterPro"/>
</dbReference>
<dbReference type="GO" id="GO:0075512">
    <property type="term" value="P:clathrin-dependent endocytosis of virus by host cell"/>
    <property type="evidence" value="ECO:0007669"/>
    <property type="project" value="UniProtKB-KW"/>
</dbReference>
<dbReference type="GO" id="GO:0039654">
    <property type="term" value="P:fusion of virus membrane with host endosome membrane"/>
    <property type="evidence" value="ECO:0007669"/>
    <property type="project" value="UniProtKB-KW"/>
</dbReference>
<dbReference type="GO" id="GO:0019064">
    <property type="term" value="P:fusion of virus membrane with host plasma membrane"/>
    <property type="evidence" value="ECO:0007669"/>
    <property type="project" value="InterPro"/>
</dbReference>
<dbReference type="GO" id="GO:0019062">
    <property type="term" value="P:virion attachment to host cell"/>
    <property type="evidence" value="ECO:0007669"/>
    <property type="project" value="UniProtKB-KW"/>
</dbReference>
<dbReference type="FunFam" id="3.90.209.20:FF:000001">
    <property type="entry name" value="Hemagglutinin"/>
    <property type="match status" value="1"/>
</dbReference>
<dbReference type="Gene3D" id="3.90.20.10">
    <property type="match status" value="1"/>
</dbReference>
<dbReference type="Gene3D" id="3.90.209.20">
    <property type="match status" value="1"/>
</dbReference>
<dbReference type="Gene3D" id="2.10.77.10">
    <property type="entry name" value="Hemagglutinin Chain A, Domain 2"/>
    <property type="match status" value="1"/>
</dbReference>
<dbReference type="HAMAP" id="MF_04072">
    <property type="entry name" value="INFV_HEMA"/>
    <property type="match status" value="1"/>
</dbReference>
<dbReference type="InterPro" id="IPR008980">
    <property type="entry name" value="Capsid_hemagglutn"/>
</dbReference>
<dbReference type="InterPro" id="IPR013828">
    <property type="entry name" value="Hemagglutn_HA1_a/b_dom_sf"/>
</dbReference>
<dbReference type="InterPro" id="IPR000149">
    <property type="entry name" value="Hemagglutn_influenz_A"/>
</dbReference>
<dbReference type="InterPro" id="IPR001364">
    <property type="entry name" value="Hemagglutn_influenz_A/B"/>
</dbReference>
<dbReference type="Pfam" id="PF00509">
    <property type="entry name" value="Hemagglutinin"/>
    <property type="match status" value="1"/>
</dbReference>
<dbReference type="PRINTS" id="PR00330">
    <property type="entry name" value="HEMAGGLUTN1"/>
</dbReference>
<dbReference type="PRINTS" id="PR00329">
    <property type="entry name" value="HEMAGGLUTN12"/>
</dbReference>
<dbReference type="SUPFAM" id="SSF58064">
    <property type="entry name" value="Influenza hemagglutinin (stalk)"/>
    <property type="match status" value="1"/>
</dbReference>
<dbReference type="SUPFAM" id="SSF49818">
    <property type="entry name" value="Viral protein domain"/>
    <property type="match status" value="1"/>
</dbReference>
<reference key="1">
    <citation type="journal article" date="2004" name="Nature">
        <title>Genesis of a highly pathogenic and potentially pandemic H5N1 influenza virus in eastern Asia.</title>
        <authorList>
            <person name="Li K.S."/>
            <person name="Guan Y."/>
            <person name="Wang J."/>
            <person name="Smith G.J.D."/>
            <person name="Xu K.M."/>
            <person name="Duan L."/>
            <person name="Rahardjo A.P."/>
            <person name="Puthavathana P."/>
            <person name="Buranathai C."/>
            <person name="Nguyen T.D."/>
            <person name="Estoepangestie A.T.S."/>
            <person name="Chaisingh A."/>
            <person name="Auewarakul P."/>
            <person name="Long H.T."/>
            <person name="Hanh N.T.H."/>
            <person name="Webby R.J."/>
            <person name="Poon L.L.M."/>
            <person name="Chen H."/>
            <person name="Shortridge K.F."/>
            <person name="Yuen K.Y."/>
            <person name="Webster R.G."/>
            <person name="Peiris J.S.M."/>
        </authorList>
    </citation>
    <scope>NUCLEOTIDE SEQUENCE [GENOMIC RNA]</scope>
</reference>
<sequence>MKKIVLLLAIVSLVKSDQICIGYHANNSTEQVDTIMEKNVTVTHAQDILEKTHNGKLCDLDGVKPLILRDCSVAGWLLGNPMCDEFINVPEWSYIVEKANPANDLCYPGDFNDYEELKHLLSRINHFEKIQIIPKSSWSNHEASSGVSSACPYNGKSSFFRNVVWLIKKDSAYPTIKRSYNNTNQEDLLILWGIHHPNDAAEQTKLYQNPTTYISVGTSTLNQRLVPKISTRSKVNGQSGRMEFFWTILKPSDAINLESNGNFIAPEYAYKIVKKGDSAIMKSELEYGNCNTKCQTPMGAINSSMPFHNIHPLTIGECPKYVKSNRLVLATGLRNTPQRERRRKKRGLFGAIAGFIEGGWQGMVDGWYGYHHSNEQGSGYAADKESTQKAIDGVTNKVNSIINKMNTQFEAVGREFNNLERRIENLNKKMEDGFLDVWTYNAELLVLMENERTLDFHDSNVKNLYDKVRLQLRDNAKELGNGCFEFYHKCDNECMESVKNGTYDYPQYSEEARLNREEISGVKLESMGTYQILSIYSTVASSLALAIMVAGLSLWMCSNGSLQCRIC</sequence>
<protein>
    <recommendedName>
        <fullName evidence="1">Hemagglutinin</fullName>
    </recommendedName>
    <component>
        <recommendedName>
            <fullName evidence="1">Hemagglutinin HA1 chain</fullName>
        </recommendedName>
    </component>
    <component>
        <recommendedName>
            <fullName evidence="1">Hemagglutinin HA2 chain</fullName>
        </recommendedName>
    </component>
</protein>
<feature type="signal peptide" evidence="1">
    <location>
        <begin position="1"/>
        <end position="16"/>
    </location>
</feature>
<feature type="chain" id="PRO_0000440814" description="Hemagglutinin" evidence="1">
    <location>
        <begin position="17"/>
        <end position="567"/>
    </location>
</feature>
<feature type="chain" id="PRO_0000440815" description="Hemagglutinin HA1 chain" evidence="1">
    <location>
        <begin position="17"/>
        <end position="346"/>
    </location>
</feature>
<feature type="chain" id="PRO_0000440816" description="Hemagglutinin HA2 chain" evidence="1">
    <location>
        <begin position="347"/>
        <end position="567"/>
    </location>
</feature>
<feature type="topological domain" description="Extracellular" evidence="1">
    <location>
        <begin position="17"/>
        <end position="531"/>
    </location>
</feature>
<feature type="transmembrane region" description="Helical" evidence="1">
    <location>
        <begin position="532"/>
        <end position="552"/>
    </location>
</feature>
<feature type="topological domain" description="Cytoplasmic" evidence="1">
    <location>
        <begin position="553"/>
        <end position="567"/>
    </location>
</feature>
<feature type="site" description="Cleavage; by host" evidence="1">
    <location>
        <begin position="346"/>
        <end position="347"/>
    </location>
</feature>
<feature type="lipid moiety-binding region" description="S-palmitoyl cysteine; by host" evidence="1">
    <location>
        <position position="557"/>
    </location>
</feature>
<feature type="lipid moiety-binding region" description="S-palmitoyl cysteine; by host" evidence="1">
    <location>
        <position position="564"/>
    </location>
</feature>
<feature type="lipid moiety-binding region" description="S-palmitoyl cysteine; by host" evidence="1">
    <location>
        <position position="567"/>
    </location>
</feature>
<feature type="glycosylation site" description="N-linked (GlcNAc...) asparagine; by host" evidence="1">
    <location>
        <position position="26"/>
    </location>
</feature>
<feature type="glycosylation site" description="N-linked (GlcNAc...) asparagine; by host" evidence="1">
    <location>
        <position position="27"/>
    </location>
</feature>
<feature type="glycosylation site" description="N-linked (GlcNAc...) asparagine; by host" evidence="1">
    <location>
        <position position="39"/>
    </location>
</feature>
<feature type="glycosylation site" description="N-linked (GlcNAc...) asparagine; by host" evidence="1">
    <location>
        <position position="181"/>
    </location>
</feature>
<feature type="glycosylation site" description="N-linked (GlcNAc...) asparagine; by host" evidence="1">
    <location>
        <position position="302"/>
    </location>
</feature>
<feature type="glycosylation site" description="N-linked (GlcNAc...) asparagine; by host" evidence="1">
    <location>
        <position position="500"/>
    </location>
</feature>
<feature type="disulfide bond" description="Interchain (between HA1 and HA2 chains)" evidence="1">
    <location>
        <begin position="20"/>
        <end position="483"/>
    </location>
</feature>
<feature type="disulfide bond" evidence="1">
    <location>
        <begin position="58"/>
        <end position="290"/>
    </location>
</feature>
<feature type="disulfide bond" evidence="1">
    <location>
        <begin position="71"/>
        <end position="83"/>
    </location>
</feature>
<feature type="disulfide bond" evidence="1">
    <location>
        <begin position="106"/>
        <end position="151"/>
    </location>
</feature>
<feature type="disulfide bond" evidence="1">
    <location>
        <begin position="294"/>
        <end position="318"/>
    </location>
</feature>
<feature type="disulfide bond" evidence="1">
    <location>
        <begin position="490"/>
        <end position="494"/>
    </location>
</feature>
<feature type="non-terminal residue">
    <location>
        <position position="567"/>
    </location>
</feature>
<evidence type="ECO:0000255" key="1">
    <source>
        <dbReference type="HAMAP-Rule" id="MF_04072"/>
    </source>
</evidence>
<name>HEMA_I02A3</name>
<gene>
    <name evidence="1" type="primary">HA</name>
</gene>
<comment type="function">
    <text evidence="1">Binds to sialic acid-containing receptors on the cell surface, bringing about the attachment of the virus particle to the cell. This attachment induces virion internalization either through clathrin-dependent endocytosis or through clathrin- and caveolin-independent pathway. Plays a major role in the determination of host range restriction and virulence. Class I viral fusion protein. Responsible for penetration of the virus into the cell cytoplasm by mediating the fusion of the membrane of the endocytosed virus particle with the endosomal membrane. Low pH in endosomes induces an irreversible conformational change in HA2, releasing the fusion hydrophobic peptide. Several trimers are required to form a competent fusion pore.</text>
</comment>
<comment type="subunit">
    <text evidence="1">Homotrimer of disulfide-linked HA1-HA2.</text>
</comment>
<comment type="subcellular location">
    <subcellularLocation>
        <location evidence="1">Virion membrane</location>
        <topology evidence="1">Single-pass type I membrane protein</topology>
    </subcellularLocation>
    <subcellularLocation>
        <location evidence="1">Host apical cell membrane</location>
        <topology evidence="1">Single-pass type I membrane protein</topology>
    </subcellularLocation>
    <text evidence="1">Targeted to the apical plasma membrane in epithelial polarized cells through a signal present in the transmembrane domain. Associated with glycosphingolipid- and cholesterol-enriched detergent-resistant lipid rafts.</text>
</comment>
<comment type="PTM">
    <text evidence="1">Palmitoylated.</text>
</comment>
<comment type="PTM">
    <text evidence="1">In natural infection, inactive HA is matured into HA1 and HA2 outside the cell by one or more trypsin-like, arginine-specific endoprotease secreted by the bronchial epithelial cells. One identified protease that may be involved in this process is secreted in lungs by club cells.</text>
</comment>
<comment type="miscellaneous">
    <text>Major glycoprotein, comprises over 80% of the envelope proteins present in virus particle.</text>
</comment>
<comment type="miscellaneous">
    <text>The extent of infection into host organism is determined by HA. Influenza viruses bud from the apical surface of polarized epithelial cells (e.g. bronchial epithelial cells) into lumen of lungs and are therefore usually pneumotropic. The reason is that HA is cleaved by tryptase clara which is restricted to lungs. However, HAs of H5 and H7 pantropic avian viruses subtypes can be cleaved by furin and subtilisin-type enzymes, allowing the virus to grow in other organs than lungs.</text>
</comment>
<comment type="miscellaneous">
    <text>The influenza A genome consist of 8 RNA segments. Genetic variation of hemagglutinin and/or neuraminidase genes results in the emergence of new influenza strains. The mechanism of variation can be the result of point mutations or the result of genetic reassortment between segments of two different strains.</text>
</comment>
<comment type="similarity">
    <text evidence="1">Belongs to the influenza viruses hemagglutinin family.</text>
</comment>
<accession>Q6DQ20</accession>